<gene>
    <name evidence="1" type="primary">lpxA</name>
    <name type="ordered locus">HDEF_0588</name>
</gene>
<reference key="1">
    <citation type="journal article" date="2009" name="Proc. Natl. Acad. Sci. U.S.A.">
        <title>Hamiltonella defensa, genome evolution of protective bacterial endosymbiont from pathogenic ancestors.</title>
        <authorList>
            <person name="Degnan P.H."/>
            <person name="Yu Y."/>
            <person name="Sisneros N."/>
            <person name="Wing R.A."/>
            <person name="Moran N.A."/>
        </authorList>
    </citation>
    <scope>NUCLEOTIDE SEQUENCE [LARGE SCALE GENOMIC DNA]</scope>
    <source>
        <strain>5AT</strain>
    </source>
</reference>
<protein>
    <recommendedName>
        <fullName evidence="1">Acyl-[acyl-carrier-protein]--UDP-N-acetylglucosamine O-acyltransferase</fullName>
        <shortName evidence="1">UDP-N-acetylglucosamine acyltransferase</shortName>
        <ecNumber evidence="1">2.3.1.129</ecNumber>
    </recommendedName>
</protein>
<evidence type="ECO:0000255" key="1">
    <source>
        <dbReference type="HAMAP-Rule" id="MF_00387"/>
    </source>
</evidence>
<feature type="chain" id="PRO_1000205795" description="Acyl-[acyl-carrier-protein]--UDP-N-acetylglucosamine O-acyltransferase">
    <location>
        <begin position="1"/>
        <end position="267"/>
    </location>
</feature>
<accession>C4K437</accession>
<dbReference type="EC" id="2.3.1.129" evidence="1"/>
<dbReference type="EMBL" id="CP001277">
    <property type="protein sequence ID" value="ACQ67330.1"/>
    <property type="molecule type" value="Genomic_DNA"/>
</dbReference>
<dbReference type="RefSeq" id="WP_015873154.1">
    <property type="nucleotide sequence ID" value="NC_012751.1"/>
</dbReference>
<dbReference type="SMR" id="C4K437"/>
<dbReference type="STRING" id="572265.HDEF_0588"/>
<dbReference type="GeneID" id="66260462"/>
<dbReference type="KEGG" id="hde:HDEF_0588"/>
<dbReference type="eggNOG" id="COG1043">
    <property type="taxonomic scope" value="Bacteria"/>
</dbReference>
<dbReference type="HOGENOM" id="CLU_061249_0_0_6"/>
<dbReference type="UniPathway" id="UPA00359">
    <property type="reaction ID" value="UER00477"/>
</dbReference>
<dbReference type="Proteomes" id="UP000002334">
    <property type="component" value="Chromosome"/>
</dbReference>
<dbReference type="GO" id="GO:0005737">
    <property type="term" value="C:cytoplasm"/>
    <property type="evidence" value="ECO:0007669"/>
    <property type="project" value="UniProtKB-SubCell"/>
</dbReference>
<dbReference type="GO" id="GO:0016020">
    <property type="term" value="C:membrane"/>
    <property type="evidence" value="ECO:0007669"/>
    <property type="project" value="GOC"/>
</dbReference>
<dbReference type="GO" id="GO:0008780">
    <property type="term" value="F:acyl-[acyl-carrier-protein]-UDP-N-acetylglucosamine O-acyltransferase activity"/>
    <property type="evidence" value="ECO:0007669"/>
    <property type="project" value="UniProtKB-UniRule"/>
</dbReference>
<dbReference type="GO" id="GO:0009245">
    <property type="term" value="P:lipid A biosynthetic process"/>
    <property type="evidence" value="ECO:0007669"/>
    <property type="project" value="UniProtKB-UniRule"/>
</dbReference>
<dbReference type="CDD" id="cd03351">
    <property type="entry name" value="LbH_UDP-GlcNAc_AT"/>
    <property type="match status" value="1"/>
</dbReference>
<dbReference type="Gene3D" id="2.160.10.10">
    <property type="entry name" value="Hexapeptide repeat proteins"/>
    <property type="match status" value="1"/>
</dbReference>
<dbReference type="Gene3D" id="1.20.1180.10">
    <property type="entry name" value="Udp N-acetylglucosamine O-acyltransferase, C-terminal domain"/>
    <property type="match status" value="1"/>
</dbReference>
<dbReference type="HAMAP" id="MF_00387">
    <property type="entry name" value="LpxA"/>
    <property type="match status" value="1"/>
</dbReference>
<dbReference type="InterPro" id="IPR029098">
    <property type="entry name" value="Acetyltransf_C"/>
</dbReference>
<dbReference type="InterPro" id="IPR037157">
    <property type="entry name" value="Acetyltransf_C_sf"/>
</dbReference>
<dbReference type="InterPro" id="IPR010137">
    <property type="entry name" value="Lipid_A_LpxA"/>
</dbReference>
<dbReference type="InterPro" id="IPR011004">
    <property type="entry name" value="Trimer_LpxA-like_sf"/>
</dbReference>
<dbReference type="NCBIfam" id="TIGR01852">
    <property type="entry name" value="lipid_A_lpxA"/>
    <property type="match status" value="1"/>
</dbReference>
<dbReference type="NCBIfam" id="NF003657">
    <property type="entry name" value="PRK05289.1"/>
    <property type="match status" value="1"/>
</dbReference>
<dbReference type="PANTHER" id="PTHR43480">
    <property type="entry name" value="ACYL-[ACYL-CARRIER-PROTEIN]--UDP-N-ACETYLGLUCOSAMINE O-ACYLTRANSFERASE"/>
    <property type="match status" value="1"/>
</dbReference>
<dbReference type="PANTHER" id="PTHR43480:SF1">
    <property type="entry name" value="ACYL-[ACYL-CARRIER-PROTEIN]--UDP-N-ACETYLGLUCOSAMINE O-ACYLTRANSFERASE, MITOCHONDRIAL-RELATED"/>
    <property type="match status" value="1"/>
</dbReference>
<dbReference type="Pfam" id="PF13720">
    <property type="entry name" value="Acetyltransf_11"/>
    <property type="match status" value="1"/>
</dbReference>
<dbReference type="PIRSF" id="PIRSF000456">
    <property type="entry name" value="UDP-GlcNAc_acltr"/>
    <property type="match status" value="1"/>
</dbReference>
<dbReference type="SUPFAM" id="SSF51161">
    <property type="entry name" value="Trimeric LpxA-like enzymes"/>
    <property type="match status" value="1"/>
</dbReference>
<dbReference type="PROSITE" id="PS00101">
    <property type="entry name" value="HEXAPEP_TRANSFERASES"/>
    <property type="match status" value="1"/>
</dbReference>
<keyword id="KW-0012">Acyltransferase</keyword>
<keyword id="KW-0963">Cytoplasm</keyword>
<keyword id="KW-0441">Lipid A biosynthesis</keyword>
<keyword id="KW-0444">Lipid biosynthesis</keyword>
<keyword id="KW-0443">Lipid metabolism</keyword>
<keyword id="KW-0677">Repeat</keyword>
<keyword id="KW-0808">Transferase</keyword>
<organism>
    <name type="scientific">Hamiltonella defensa subsp. Acyrthosiphon pisum (strain 5AT)</name>
    <dbReference type="NCBI Taxonomy" id="572265"/>
    <lineage>
        <taxon>Bacteria</taxon>
        <taxon>Pseudomonadati</taxon>
        <taxon>Pseudomonadota</taxon>
        <taxon>Gammaproteobacteria</taxon>
        <taxon>Enterobacterales</taxon>
        <taxon>Enterobacteriaceae</taxon>
        <taxon>aphid secondary symbionts</taxon>
        <taxon>Candidatus Hamiltonella</taxon>
    </lineage>
</organism>
<proteinExistence type="inferred from homology"/>
<comment type="function">
    <text evidence="1">Involved in the biosynthesis of lipid A, a phosphorylated glycolipid that anchors the lipopolysaccharide to the outer membrane of the cell.</text>
</comment>
<comment type="catalytic activity">
    <reaction evidence="1">
        <text>a (3R)-hydroxyacyl-[ACP] + UDP-N-acetyl-alpha-D-glucosamine = a UDP-3-O-[(3R)-3-hydroxyacyl]-N-acetyl-alpha-D-glucosamine + holo-[ACP]</text>
        <dbReference type="Rhea" id="RHEA:67812"/>
        <dbReference type="Rhea" id="RHEA-COMP:9685"/>
        <dbReference type="Rhea" id="RHEA-COMP:9945"/>
        <dbReference type="ChEBI" id="CHEBI:57705"/>
        <dbReference type="ChEBI" id="CHEBI:64479"/>
        <dbReference type="ChEBI" id="CHEBI:78827"/>
        <dbReference type="ChEBI" id="CHEBI:173225"/>
        <dbReference type="EC" id="2.3.1.129"/>
    </reaction>
</comment>
<comment type="pathway">
    <text evidence="1">Glycolipid biosynthesis; lipid IV(A) biosynthesis; lipid IV(A) from (3R)-3-hydroxytetradecanoyl-[acyl-carrier-protein] and UDP-N-acetyl-alpha-D-glucosamine: step 1/6.</text>
</comment>
<comment type="subunit">
    <text evidence="1">Homotrimer.</text>
</comment>
<comment type="subcellular location">
    <subcellularLocation>
        <location evidence="1">Cytoplasm</location>
    </subcellularLocation>
</comment>
<comment type="similarity">
    <text evidence="1">Belongs to the transferase hexapeptide repeat family. LpxA subfamily.</text>
</comment>
<sequence length="267" mass="29107">MIQKKTFIHPTSIVEKGAIVHEGAHIGPFCYIGSQVEIGSGTELKSHIVINGITKIGKNNVIYQFCSIGEVNQDLKYKGEFTRVEIGDSNLIRESVSIHRGTEQGEGVTCVGNHNLLMFNTHVAHDCLIGHHCILANSTTLGGHVEIHDHAVIGGLSAVHQFCKVGSYAMLAGCSAVVKHIPPFILAQGNHASLVGPNTVGLKRHFSEAKYKAILRAYQLLYKQGKSLEDAKLELAKLAELHPVVILLLNFLNQIDLNSDKNRGIVR</sequence>
<name>LPXA_HAMD5</name>